<proteinExistence type="inferred from homology"/>
<accession>C1A8L5</accession>
<keyword id="KW-0046">Antibiotic resistance</keyword>
<keyword id="KW-0997">Cell inner membrane</keyword>
<keyword id="KW-1003">Cell membrane</keyword>
<keyword id="KW-0133">Cell shape</keyword>
<keyword id="KW-0961">Cell wall biogenesis/degradation</keyword>
<keyword id="KW-0378">Hydrolase</keyword>
<keyword id="KW-0472">Membrane</keyword>
<keyword id="KW-0573">Peptidoglycan synthesis</keyword>
<keyword id="KW-1185">Reference proteome</keyword>
<keyword id="KW-0812">Transmembrane</keyword>
<keyword id="KW-1133">Transmembrane helix</keyword>
<sequence length="267" mass="29033">MTVWQAIVLGIVQGLTEPLPVSSSAHLALTPYFLGWSDPGLAFDVALHFGTLLALIWYFRREWLEMIASAWRIARTRRVETVHDRRVLYLIAATIPGGIGGLLLNDLAETTFRSPVVIATSLIVMGILLWAVDRWSARARVLEEVTLRDAIIVGCAQVLALVPGVSRSGSTMTAGRLLKLDRPSVARFSFLMSMPITLAAVIVKMPDAVREHGASLPLLAGVAAAAVSSWFAISVLLRYVARHSFGVFAVYRVLLGIVVFATLASRT</sequence>
<organism>
    <name type="scientific">Gemmatimonas aurantiaca (strain DSM 14586 / JCM 11422 / NBRC 100505 / T-27)</name>
    <dbReference type="NCBI Taxonomy" id="379066"/>
    <lineage>
        <taxon>Bacteria</taxon>
        <taxon>Pseudomonadati</taxon>
        <taxon>Gemmatimonadota</taxon>
        <taxon>Gemmatimonadia</taxon>
        <taxon>Gemmatimonadales</taxon>
        <taxon>Gemmatimonadaceae</taxon>
        <taxon>Gemmatimonas</taxon>
    </lineage>
</organism>
<feature type="chain" id="PRO_1000213151" description="Undecaprenyl-diphosphatase">
    <location>
        <begin position="1"/>
        <end position="267"/>
    </location>
</feature>
<feature type="transmembrane region" description="Helical" evidence="1">
    <location>
        <begin position="39"/>
        <end position="59"/>
    </location>
</feature>
<feature type="transmembrane region" description="Helical" evidence="1">
    <location>
        <begin position="87"/>
        <end position="107"/>
    </location>
</feature>
<feature type="transmembrane region" description="Helical" evidence="1">
    <location>
        <begin position="112"/>
        <end position="132"/>
    </location>
</feature>
<feature type="transmembrane region" description="Helical" evidence="1">
    <location>
        <begin position="145"/>
        <end position="165"/>
    </location>
</feature>
<feature type="transmembrane region" description="Helical" evidence="1">
    <location>
        <begin position="183"/>
        <end position="203"/>
    </location>
</feature>
<feature type="transmembrane region" description="Helical" evidence="1">
    <location>
        <begin position="216"/>
        <end position="236"/>
    </location>
</feature>
<feature type="transmembrane region" description="Helical" evidence="1">
    <location>
        <begin position="244"/>
        <end position="264"/>
    </location>
</feature>
<name>UPPP_GEMAT</name>
<dbReference type="EC" id="3.6.1.27" evidence="1"/>
<dbReference type="EMBL" id="AP009153">
    <property type="protein sequence ID" value="BAH38575.1"/>
    <property type="molecule type" value="Genomic_DNA"/>
</dbReference>
<dbReference type="RefSeq" id="WP_012683022.1">
    <property type="nucleotide sequence ID" value="NC_012489.1"/>
</dbReference>
<dbReference type="SMR" id="C1A8L5"/>
<dbReference type="STRING" id="379066.GAU_1533"/>
<dbReference type="KEGG" id="gau:GAU_1533"/>
<dbReference type="eggNOG" id="COG1968">
    <property type="taxonomic scope" value="Bacteria"/>
</dbReference>
<dbReference type="HOGENOM" id="CLU_060296_1_0_0"/>
<dbReference type="OrthoDB" id="9808289at2"/>
<dbReference type="Proteomes" id="UP000002209">
    <property type="component" value="Chromosome"/>
</dbReference>
<dbReference type="GO" id="GO:0005886">
    <property type="term" value="C:plasma membrane"/>
    <property type="evidence" value="ECO:0007669"/>
    <property type="project" value="UniProtKB-SubCell"/>
</dbReference>
<dbReference type="GO" id="GO:0050380">
    <property type="term" value="F:undecaprenyl-diphosphatase activity"/>
    <property type="evidence" value="ECO:0007669"/>
    <property type="project" value="UniProtKB-UniRule"/>
</dbReference>
<dbReference type="GO" id="GO:0071555">
    <property type="term" value="P:cell wall organization"/>
    <property type="evidence" value="ECO:0007669"/>
    <property type="project" value="UniProtKB-KW"/>
</dbReference>
<dbReference type="GO" id="GO:0009252">
    <property type="term" value="P:peptidoglycan biosynthetic process"/>
    <property type="evidence" value="ECO:0007669"/>
    <property type="project" value="UniProtKB-KW"/>
</dbReference>
<dbReference type="GO" id="GO:0008360">
    <property type="term" value="P:regulation of cell shape"/>
    <property type="evidence" value="ECO:0007669"/>
    <property type="project" value="UniProtKB-KW"/>
</dbReference>
<dbReference type="GO" id="GO:0046677">
    <property type="term" value="P:response to antibiotic"/>
    <property type="evidence" value="ECO:0007669"/>
    <property type="project" value="UniProtKB-UniRule"/>
</dbReference>
<dbReference type="HAMAP" id="MF_01006">
    <property type="entry name" value="Undec_diphosphatase"/>
    <property type="match status" value="1"/>
</dbReference>
<dbReference type="InterPro" id="IPR003824">
    <property type="entry name" value="UppP"/>
</dbReference>
<dbReference type="NCBIfam" id="TIGR00753">
    <property type="entry name" value="undec_PP_bacA"/>
    <property type="match status" value="1"/>
</dbReference>
<dbReference type="PANTHER" id="PTHR30622">
    <property type="entry name" value="UNDECAPRENYL-DIPHOSPHATASE"/>
    <property type="match status" value="1"/>
</dbReference>
<dbReference type="PANTHER" id="PTHR30622:SF4">
    <property type="entry name" value="UNDECAPRENYL-DIPHOSPHATASE"/>
    <property type="match status" value="1"/>
</dbReference>
<dbReference type="Pfam" id="PF02673">
    <property type="entry name" value="BacA"/>
    <property type="match status" value="1"/>
</dbReference>
<protein>
    <recommendedName>
        <fullName evidence="1">Undecaprenyl-diphosphatase</fullName>
        <ecNumber evidence="1">3.6.1.27</ecNumber>
    </recommendedName>
    <alternativeName>
        <fullName evidence="1">Bacitracin resistance protein</fullName>
    </alternativeName>
    <alternativeName>
        <fullName evidence="1">Undecaprenyl pyrophosphate phosphatase</fullName>
    </alternativeName>
</protein>
<reference key="1">
    <citation type="submission" date="2006-03" db="EMBL/GenBank/DDBJ databases">
        <title>Complete genome sequence of Gemmatimonas aurantiaca T-27 that represents a novel phylum Gemmatimonadetes.</title>
        <authorList>
            <person name="Takasaki K."/>
            <person name="Ichikawa N."/>
            <person name="Miura H."/>
            <person name="Matsushita S."/>
            <person name="Watanabe Y."/>
            <person name="Oguchi A."/>
            <person name="Ankai A."/>
            <person name="Yashiro I."/>
            <person name="Takahashi M."/>
            <person name="Terui Y."/>
            <person name="Fukui S."/>
            <person name="Yokoyama H."/>
            <person name="Tanikawa S."/>
            <person name="Hanada S."/>
            <person name="Kamagata Y."/>
            <person name="Fujita N."/>
        </authorList>
    </citation>
    <scope>NUCLEOTIDE SEQUENCE [LARGE SCALE GENOMIC DNA]</scope>
    <source>
        <strain>DSM 14586 / JCM 11422 / NBRC 100505 / T-27</strain>
    </source>
</reference>
<evidence type="ECO:0000255" key="1">
    <source>
        <dbReference type="HAMAP-Rule" id="MF_01006"/>
    </source>
</evidence>
<comment type="function">
    <text evidence="1">Catalyzes the dephosphorylation of undecaprenyl diphosphate (UPP). Confers resistance to bacitracin.</text>
</comment>
<comment type="catalytic activity">
    <reaction evidence="1">
        <text>di-trans,octa-cis-undecaprenyl diphosphate + H2O = di-trans,octa-cis-undecaprenyl phosphate + phosphate + H(+)</text>
        <dbReference type="Rhea" id="RHEA:28094"/>
        <dbReference type="ChEBI" id="CHEBI:15377"/>
        <dbReference type="ChEBI" id="CHEBI:15378"/>
        <dbReference type="ChEBI" id="CHEBI:43474"/>
        <dbReference type="ChEBI" id="CHEBI:58405"/>
        <dbReference type="ChEBI" id="CHEBI:60392"/>
        <dbReference type="EC" id="3.6.1.27"/>
    </reaction>
</comment>
<comment type="subcellular location">
    <subcellularLocation>
        <location evidence="1">Cell inner membrane</location>
        <topology evidence="1">Multi-pass membrane protein</topology>
    </subcellularLocation>
</comment>
<comment type="miscellaneous">
    <text>Bacitracin is thought to be involved in the inhibition of peptidoglycan synthesis by sequestering undecaprenyl diphosphate, thereby reducing the pool of lipid carrier available.</text>
</comment>
<comment type="similarity">
    <text evidence="1">Belongs to the UppP family.</text>
</comment>
<gene>
    <name evidence="1" type="primary">uppP</name>
    <name type="ordered locus">GAU_1533</name>
</gene>